<protein>
    <recommendedName>
        <fullName>P2Y purinoceptor 1</fullName>
        <shortName>P2Y1</shortName>
    </recommendedName>
    <alternativeName>
        <fullName>ADP receptor</fullName>
    </alternativeName>
    <alternativeName>
        <fullName>Purinergic receptor</fullName>
    </alternativeName>
</protein>
<name>P2RY1_MOUSE</name>
<keyword id="KW-0067">ATP-binding</keyword>
<keyword id="KW-1003">Cell membrane</keyword>
<keyword id="KW-1015">Disulfide bond</keyword>
<keyword id="KW-0297">G-protein coupled receptor</keyword>
<keyword id="KW-0325">Glycoprotein</keyword>
<keyword id="KW-0472">Membrane</keyword>
<keyword id="KW-0547">Nucleotide-binding</keyword>
<keyword id="KW-0675">Receptor</keyword>
<keyword id="KW-1185">Reference proteome</keyword>
<keyword id="KW-0807">Transducer</keyword>
<keyword id="KW-0812">Transmembrane</keyword>
<keyword id="KW-1133">Transmembrane helix</keyword>
<proteinExistence type="evidence at transcript level"/>
<evidence type="ECO:0000250" key="1">
    <source>
        <dbReference type="UniProtKB" id="P47900"/>
    </source>
</evidence>
<evidence type="ECO:0000255" key="2"/>
<evidence type="ECO:0000255" key="3">
    <source>
        <dbReference type="PROSITE-ProRule" id="PRU00521"/>
    </source>
</evidence>
<evidence type="ECO:0000269" key="4">
    <source>
    </source>
</evidence>
<evidence type="ECO:0000305" key="5"/>
<sequence>MTEVPWSVVPNGTDAAFLAGLGSLWGNSTVASTAAVSSSFQCALTKTGFQFYYLPAVYILVFIIGFLGNSVAIWMFVFHMKPWSGISVYMFNLALADFLYVLTLPALIFYYFNKTDWIFGDAMCKLQRFIFHVNLYGSILFLTCISAHRYSGVVYPLKSLGRLKKKNAIYVSVLVWLIVVVAISPILFYSGTGTRKNKTVTCYDTTSNDYLRSYFIYSMCTTVAMFCIPLVLILGCYGLIVKALIYNDLDNSPLRRKSIYLVIIVLTVFAVSYIPFHVMKTMNLRARLDFQTPEMCDFNDRVYATYQVTRGLASLNSCVDPILYFLAGDTFRRRLSRATRKASRRSEANLQSKSEEMTLNILSEFKQNGDTSL</sequence>
<gene>
    <name type="primary">P2ry1</name>
</gene>
<feature type="chain" id="PRO_0000070007" description="P2Y purinoceptor 1">
    <location>
        <begin position="1"/>
        <end position="373"/>
    </location>
</feature>
<feature type="topological domain" description="Extracellular" evidence="5">
    <location>
        <begin position="1"/>
        <end position="51"/>
    </location>
</feature>
<feature type="transmembrane region" description="Helical; Name=1" evidence="1">
    <location>
        <begin position="52"/>
        <end position="74"/>
    </location>
</feature>
<feature type="topological domain" description="Cytoplasmic" evidence="5">
    <location>
        <begin position="75"/>
        <end position="87"/>
    </location>
</feature>
<feature type="transmembrane region" description="Helical; Name=2" evidence="1">
    <location>
        <begin position="88"/>
        <end position="109"/>
    </location>
</feature>
<feature type="topological domain" description="Extracellular" evidence="5">
    <location>
        <begin position="110"/>
        <end position="125"/>
    </location>
</feature>
<feature type="transmembrane region" description="Helical; Name=3" evidence="1">
    <location>
        <begin position="126"/>
        <end position="147"/>
    </location>
</feature>
<feature type="topological domain" description="Cytoplasmic" evidence="5">
    <location>
        <begin position="148"/>
        <end position="166"/>
    </location>
</feature>
<feature type="transmembrane region" description="Helical; Name=4" evidence="1">
    <location>
        <begin position="167"/>
        <end position="188"/>
    </location>
</feature>
<feature type="topological domain" description="Extracellular" evidence="5">
    <location>
        <begin position="189"/>
        <end position="214"/>
    </location>
</feature>
<feature type="transmembrane region" description="Helical; Name=5" evidence="1">
    <location>
        <begin position="215"/>
        <end position="237"/>
    </location>
</feature>
<feature type="topological domain" description="Cytoplasmic" evidence="5">
    <location>
        <begin position="238"/>
        <end position="260"/>
    </location>
</feature>
<feature type="transmembrane region" description="Helical; Name=6" evidence="1">
    <location>
        <begin position="261"/>
        <end position="284"/>
    </location>
</feature>
<feature type="topological domain" description="Extracellular" evidence="5">
    <location>
        <begin position="285"/>
        <end position="303"/>
    </location>
</feature>
<feature type="transmembrane region" description="Helical; Name=7" evidence="1">
    <location>
        <begin position="304"/>
        <end position="325"/>
    </location>
</feature>
<feature type="topological domain" description="Cytoplasmic" evidence="5">
    <location>
        <begin position="326"/>
        <end position="373"/>
    </location>
</feature>
<feature type="binding site" evidence="1">
    <location>
        <position position="46"/>
    </location>
    <ligand>
        <name>ADP</name>
        <dbReference type="ChEBI" id="CHEBI:456216"/>
    </ligand>
</feature>
<feature type="binding site" evidence="1">
    <location>
        <begin position="203"/>
        <end position="205"/>
    </location>
    <ligand>
        <name>ADP</name>
        <dbReference type="ChEBI" id="CHEBI:456216"/>
    </ligand>
</feature>
<feature type="binding site" evidence="1">
    <location>
        <begin position="283"/>
        <end position="287"/>
    </location>
    <ligand>
        <name>ADP</name>
        <dbReference type="ChEBI" id="CHEBI:456216"/>
    </ligand>
</feature>
<feature type="binding site" evidence="1">
    <location>
        <begin position="303"/>
        <end position="306"/>
    </location>
    <ligand>
        <name>ADP</name>
        <dbReference type="ChEBI" id="CHEBI:456216"/>
    </ligand>
</feature>
<feature type="binding site" evidence="1">
    <location>
        <position position="310"/>
    </location>
    <ligand>
        <name>ADP</name>
        <dbReference type="ChEBI" id="CHEBI:456216"/>
    </ligand>
</feature>
<feature type="glycosylation site" description="N-linked (GlcNAc...) asparagine" evidence="2">
    <location>
        <position position="11"/>
    </location>
</feature>
<feature type="glycosylation site" description="N-linked (GlcNAc...) asparagine" evidence="2">
    <location>
        <position position="27"/>
    </location>
</feature>
<feature type="glycosylation site" description="N-linked (GlcNAc...) asparagine" evidence="2">
    <location>
        <position position="113"/>
    </location>
</feature>
<feature type="glycosylation site" description="N-linked (GlcNAc...) asparagine" evidence="2">
    <location>
        <position position="197"/>
    </location>
</feature>
<feature type="disulfide bond" evidence="1">
    <location>
        <begin position="42"/>
        <end position="296"/>
    </location>
</feature>
<feature type="disulfide bond" evidence="3">
    <location>
        <begin position="124"/>
        <end position="202"/>
    </location>
</feature>
<comment type="function">
    <text evidence="4">Receptor for extracellular adenine nucleotides such as ADP. In platelets, binding to ADP leads to mobilization of intracellular calcium ions via activation of phospholipase C, a change in platelet shape, and ultimately platelet aggregation.</text>
</comment>
<comment type="subcellular location">
    <subcellularLocation>
        <location evidence="1">Cell membrane</location>
        <topology evidence="1">Multi-pass membrane protein</topology>
    </subcellularLocation>
</comment>
<comment type="disruption phenotype">
    <text evidence="4">Platelets from mutant mice are defective in ADP-mediated platelet aggregation, leading to prolonged bleeding time. Otherwise, mice have no visible phenotype and do not display spontaneous bleeding.</text>
</comment>
<comment type="similarity">
    <text evidence="3">Belongs to the G-protein coupled receptor 1 family.</text>
</comment>
<dbReference type="EMBL" id="U22829">
    <property type="protein sequence ID" value="AAA91302.1"/>
    <property type="molecule type" value="mRNA"/>
</dbReference>
<dbReference type="EMBL" id="AJ245636">
    <property type="protein sequence ID" value="CAB57317.1"/>
    <property type="molecule type" value="Genomic_DNA"/>
</dbReference>
<dbReference type="CCDS" id="CCDS17377.1"/>
<dbReference type="RefSeq" id="NP_001268945.1">
    <property type="nucleotide sequence ID" value="NM_001282016.1"/>
</dbReference>
<dbReference type="RefSeq" id="NP_032798.1">
    <property type="nucleotide sequence ID" value="NM_008772.5"/>
</dbReference>
<dbReference type="SMR" id="P49650"/>
<dbReference type="CORUM" id="P49650"/>
<dbReference type="FunCoup" id="P49650">
    <property type="interactions" value="842"/>
</dbReference>
<dbReference type="STRING" id="10090.ENSMUSP00000029331"/>
<dbReference type="GlyCosmos" id="P49650">
    <property type="glycosylation" value="4 sites, No reported glycans"/>
</dbReference>
<dbReference type="GlyGen" id="P49650">
    <property type="glycosylation" value="4 sites"/>
</dbReference>
<dbReference type="iPTMnet" id="P49650"/>
<dbReference type="PhosphoSitePlus" id="P49650"/>
<dbReference type="PaxDb" id="10090-ENSMUSP00000029331"/>
<dbReference type="ProteomicsDB" id="294088"/>
<dbReference type="Antibodypedia" id="2952">
    <property type="antibodies" value="402 antibodies from 36 providers"/>
</dbReference>
<dbReference type="DNASU" id="18441"/>
<dbReference type="Ensembl" id="ENSMUST00000029331.7">
    <property type="protein sequence ID" value="ENSMUSP00000029331.2"/>
    <property type="gene ID" value="ENSMUSG00000027765.7"/>
</dbReference>
<dbReference type="Ensembl" id="ENSMUST00000193201.2">
    <property type="protein sequence ID" value="ENSMUSP00000142006.2"/>
    <property type="gene ID" value="ENSMUSG00000027765.7"/>
</dbReference>
<dbReference type="Ensembl" id="ENSMUST00000193943.2">
    <property type="protein sequence ID" value="ENSMUSP00000141371.2"/>
    <property type="gene ID" value="ENSMUSG00000027765.7"/>
</dbReference>
<dbReference type="GeneID" id="18441"/>
<dbReference type="KEGG" id="mmu:18441"/>
<dbReference type="UCSC" id="uc008pjj.2">
    <property type="organism name" value="mouse"/>
</dbReference>
<dbReference type="AGR" id="MGI:105049"/>
<dbReference type="CTD" id="5028"/>
<dbReference type="MGI" id="MGI:105049">
    <property type="gene designation" value="P2ry1"/>
</dbReference>
<dbReference type="VEuPathDB" id="HostDB:ENSMUSG00000027765"/>
<dbReference type="eggNOG" id="ENOG502QWPV">
    <property type="taxonomic scope" value="Eukaryota"/>
</dbReference>
<dbReference type="GeneTree" id="ENSGT01030000234621"/>
<dbReference type="HOGENOM" id="CLU_009579_8_2_1"/>
<dbReference type="InParanoid" id="P49650"/>
<dbReference type="OMA" id="GFCVPFI"/>
<dbReference type="OrthoDB" id="8190652at2759"/>
<dbReference type="PhylomeDB" id="P49650"/>
<dbReference type="TreeFam" id="TF350009"/>
<dbReference type="Reactome" id="R-MMU-416476">
    <property type="pathway name" value="G alpha (q) signalling events"/>
</dbReference>
<dbReference type="Reactome" id="R-MMU-417957">
    <property type="pathway name" value="P2Y receptors"/>
</dbReference>
<dbReference type="Reactome" id="R-MMU-418592">
    <property type="pathway name" value="ADP signalling through P2Y purinoceptor 1"/>
</dbReference>
<dbReference type="BioGRID-ORCS" id="18441">
    <property type="hits" value="3 hits in 76 CRISPR screens"/>
</dbReference>
<dbReference type="PRO" id="PR:P49650"/>
<dbReference type="Proteomes" id="UP000000589">
    <property type="component" value="Chromosome 3"/>
</dbReference>
<dbReference type="RNAct" id="P49650">
    <property type="molecule type" value="protein"/>
</dbReference>
<dbReference type="Bgee" id="ENSMUSG00000027765">
    <property type="expression patterns" value="Expressed in lumbar dorsal root ganglion and 86 other cell types or tissues"/>
</dbReference>
<dbReference type="ExpressionAtlas" id="P49650">
    <property type="expression patterns" value="baseline and differential"/>
</dbReference>
<dbReference type="GO" id="GO:0016324">
    <property type="term" value="C:apical plasma membrane"/>
    <property type="evidence" value="ECO:0007669"/>
    <property type="project" value="Ensembl"/>
</dbReference>
<dbReference type="GO" id="GO:0016323">
    <property type="term" value="C:basolateral plasma membrane"/>
    <property type="evidence" value="ECO:0007669"/>
    <property type="project" value="Ensembl"/>
</dbReference>
<dbReference type="GO" id="GO:0044297">
    <property type="term" value="C:cell body"/>
    <property type="evidence" value="ECO:0007669"/>
    <property type="project" value="Ensembl"/>
</dbReference>
<dbReference type="GO" id="GO:0005929">
    <property type="term" value="C:cilium"/>
    <property type="evidence" value="ECO:0000266"/>
    <property type="project" value="MGI"/>
</dbReference>
<dbReference type="GO" id="GO:0030425">
    <property type="term" value="C:dendrite"/>
    <property type="evidence" value="ECO:0007669"/>
    <property type="project" value="Ensembl"/>
</dbReference>
<dbReference type="GO" id="GO:0098978">
    <property type="term" value="C:glutamatergic synapse"/>
    <property type="evidence" value="ECO:0007669"/>
    <property type="project" value="Ensembl"/>
</dbReference>
<dbReference type="GO" id="GO:0005886">
    <property type="term" value="C:plasma membrane"/>
    <property type="evidence" value="ECO:0000314"/>
    <property type="project" value="MGI"/>
</dbReference>
<dbReference type="GO" id="GO:0014069">
    <property type="term" value="C:postsynaptic density"/>
    <property type="evidence" value="ECO:0007669"/>
    <property type="project" value="Ensembl"/>
</dbReference>
<dbReference type="GO" id="GO:0045211">
    <property type="term" value="C:postsynaptic membrane"/>
    <property type="evidence" value="ECO:0007669"/>
    <property type="project" value="Ensembl"/>
</dbReference>
<dbReference type="GO" id="GO:0048787">
    <property type="term" value="C:presynaptic active zone membrane"/>
    <property type="evidence" value="ECO:0007669"/>
    <property type="project" value="Ensembl"/>
</dbReference>
<dbReference type="GO" id="GO:0031686">
    <property type="term" value="F:A1 adenosine receptor binding"/>
    <property type="evidence" value="ECO:0007669"/>
    <property type="project" value="Ensembl"/>
</dbReference>
<dbReference type="GO" id="GO:0043531">
    <property type="term" value="F:ADP binding"/>
    <property type="evidence" value="ECO:0007669"/>
    <property type="project" value="Ensembl"/>
</dbReference>
<dbReference type="GO" id="GO:0005524">
    <property type="term" value="F:ATP binding"/>
    <property type="evidence" value="ECO:0000250"/>
    <property type="project" value="UniProtKB"/>
</dbReference>
<dbReference type="GO" id="GO:0001621">
    <property type="term" value="F:G protein-coupled ADP receptor activity"/>
    <property type="evidence" value="ECO:0000250"/>
    <property type="project" value="UniProtKB"/>
</dbReference>
<dbReference type="GO" id="GO:0045031">
    <property type="term" value="F:G protein-coupled ATP receptor activity"/>
    <property type="evidence" value="ECO:0007669"/>
    <property type="project" value="Ensembl"/>
</dbReference>
<dbReference type="GO" id="GO:0046982">
    <property type="term" value="F:protein heterodimerization activity"/>
    <property type="evidence" value="ECO:0007669"/>
    <property type="project" value="Ensembl"/>
</dbReference>
<dbReference type="GO" id="GO:0097110">
    <property type="term" value="F:scaffold protein binding"/>
    <property type="evidence" value="ECO:0007669"/>
    <property type="project" value="Ensembl"/>
</dbReference>
<dbReference type="GO" id="GO:0030545">
    <property type="term" value="F:signaling receptor regulator activity"/>
    <property type="evidence" value="ECO:0007669"/>
    <property type="project" value="Ensembl"/>
</dbReference>
<dbReference type="GO" id="GO:0007193">
    <property type="term" value="P:adenylate cyclase-inhibiting G protein-coupled receptor signaling pathway"/>
    <property type="evidence" value="ECO:0007669"/>
    <property type="project" value="Ensembl"/>
</dbReference>
<dbReference type="GO" id="GO:0097746">
    <property type="term" value="P:blood vessel diameter maintenance"/>
    <property type="evidence" value="ECO:0007669"/>
    <property type="project" value="Ensembl"/>
</dbReference>
<dbReference type="GO" id="GO:0071415">
    <property type="term" value="P:cellular response to purine-containing compound"/>
    <property type="evidence" value="ECO:0000250"/>
    <property type="project" value="UniProtKB"/>
</dbReference>
<dbReference type="GO" id="GO:0042755">
    <property type="term" value="P:eating behavior"/>
    <property type="evidence" value="ECO:0007669"/>
    <property type="project" value="Ensembl"/>
</dbReference>
<dbReference type="GO" id="GO:0051649">
    <property type="term" value="P:establishment of localization in cell"/>
    <property type="evidence" value="ECO:0000315"/>
    <property type="project" value="MGI"/>
</dbReference>
<dbReference type="GO" id="GO:0001973">
    <property type="term" value="P:G protein-coupled adenosine receptor signaling pathway"/>
    <property type="evidence" value="ECO:0007669"/>
    <property type="project" value="Ensembl"/>
</dbReference>
<dbReference type="GO" id="GO:0008347">
    <property type="term" value="P:glial cell migration"/>
    <property type="evidence" value="ECO:0007669"/>
    <property type="project" value="Ensembl"/>
</dbReference>
<dbReference type="GO" id="GO:0006811">
    <property type="term" value="P:monoatomic ion transport"/>
    <property type="evidence" value="ECO:0000315"/>
    <property type="project" value="MGI"/>
</dbReference>
<dbReference type="GO" id="GO:0010700">
    <property type="term" value="P:negative regulation of norepinephrine secretion"/>
    <property type="evidence" value="ECO:0007669"/>
    <property type="project" value="Ensembl"/>
</dbReference>
<dbReference type="GO" id="GO:0007200">
    <property type="term" value="P:phospholipase C-activating G protein-coupled receptor signaling pathway"/>
    <property type="evidence" value="ECO:0000250"/>
    <property type="project" value="UniProtKB"/>
</dbReference>
<dbReference type="GO" id="GO:0030168">
    <property type="term" value="P:platelet activation"/>
    <property type="evidence" value="ECO:0007669"/>
    <property type="project" value="InterPro"/>
</dbReference>
<dbReference type="GO" id="GO:0007204">
    <property type="term" value="P:positive regulation of cytosolic calcium ion concentration"/>
    <property type="evidence" value="ECO:0007669"/>
    <property type="project" value="Ensembl"/>
</dbReference>
<dbReference type="GO" id="GO:0070374">
    <property type="term" value="P:positive regulation of ERK1 and ERK2 cascade"/>
    <property type="evidence" value="ECO:0007669"/>
    <property type="project" value="Ensembl"/>
</dbReference>
<dbReference type="GO" id="GO:0046887">
    <property type="term" value="P:positive regulation of hormone secretion"/>
    <property type="evidence" value="ECO:0007669"/>
    <property type="project" value="Ensembl"/>
</dbReference>
<dbReference type="GO" id="GO:0032962">
    <property type="term" value="P:positive regulation of inositol trisphosphate biosynthetic process"/>
    <property type="evidence" value="ECO:0007669"/>
    <property type="project" value="Ensembl"/>
</dbReference>
<dbReference type="GO" id="GO:0043270">
    <property type="term" value="P:positive regulation of monoatomic ion transport"/>
    <property type="evidence" value="ECO:0000315"/>
    <property type="project" value="MGI"/>
</dbReference>
<dbReference type="GO" id="GO:0060406">
    <property type="term" value="P:positive regulation of penile erection"/>
    <property type="evidence" value="ECO:0007669"/>
    <property type="project" value="Ensembl"/>
</dbReference>
<dbReference type="GO" id="GO:0045944">
    <property type="term" value="P:positive regulation of transcription by RNA polymerase II"/>
    <property type="evidence" value="ECO:0007669"/>
    <property type="project" value="Ensembl"/>
</dbReference>
<dbReference type="GO" id="GO:0072659">
    <property type="term" value="P:protein localization to plasma membrane"/>
    <property type="evidence" value="ECO:0007669"/>
    <property type="project" value="Ensembl"/>
</dbReference>
<dbReference type="GO" id="GO:0008360">
    <property type="term" value="P:regulation of cell shape"/>
    <property type="evidence" value="ECO:0000250"/>
    <property type="project" value="UniProtKB"/>
</dbReference>
<dbReference type="GO" id="GO:0099509">
    <property type="term" value="P:regulation of presynaptic cytosolic calcium ion concentration"/>
    <property type="evidence" value="ECO:0007669"/>
    <property type="project" value="Ensembl"/>
</dbReference>
<dbReference type="GO" id="GO:2000300">
    <property type="term" value="P:regulation of synaptic vesicle exocytosis"/>
    <property type="evidence" value="ECO:0007669"/>
    <property type="project" value="Ensembl"/>
</dbReference>
<dbReference type="GO" id="GO:0090075">
    <property type="term" value="P:relaxation of muscle"/>
    <property type="evidence" value="ECO:0007669"/>
    <property type="project" value="InterPro"/>
</dbReference>
<dbReference type="GO" id="GO:0070848">
    <property type="term" value="P:response to growth factor"/>
    <property type="evidence" value="ECO:0007669"/>
    <property type="project" value="Ensembl"/>
</dbReference>
<dbReference type="GO" id="GO:0009612">
    <property type="term" value="P:response to mechanical stimulus"/>
    <property type="evidence" value="ECO:0007669"/>
    <property type="project" value="Ensembl"/>
</dbReference>
<dbReference type="GO" id="GO:0023019">
    <property type="term" value="P:signal transduction involved in regulation of gene expression"/>
    <property type="evidence" value="ECO:0007669"/>
    <property type="project" value="Ensembl"/>
</dbReference>
<dbReference type="CDD" id="cd15377">
    <property type="entry name" value="7tmA_P2Y1"/>
    <property type="match status" value="1"/>
</dbReference>
<dbReference type="FunFam" id="1.20.1070.10:FF:000017">
    <property type="entry name" value="lysophosphatidic acid receptor 4"/>
    <property type="match status" value="1"/>
</dbReference>
<dbReference type="Gene3D" id="1.20.1070.10">
    <property type="entry name" value="Rhodopsin 7-helix transmembrane proteins"/>
    <property type="match status" value="1"/>
</dbReference>
<dbReference type="InterPro" id="IPR000276">
    <property type="entry name" value="GPCR_Rhodpsn"/>
</dbReference>
<dbReference type="InterPro" id="IPR017452">
    <property type="entry name" value="GPCR_Rhodpsn_7TM"/>
</dbReference>
<dbReference type="InterPro" id="IPR000142">
    <property type="entry name" value="P2Y1_rcpt"/>
</dbReference>
<dbReference type="PANTHER" id="PTHR24231:SF2">
    <property type="entry name" value="P2Y PURINOCEPTOR 1"/>
    <property type="match status" value="1"/>
</dbReference>
<dbReference type="PANTHER" id="PTHR24231">
    <property type="entry name" value="PURINOCEPTOR-RELATED G-PROTEIN COUPLED RECEPTOR"/>
    <property type="match status" value="1"/>
</dbReference>
<dbReference type="Pfam" id="PF00001">
    <property type="entry name" value="7tm_1"/>
    <property type="match status" value="1"/>
</dbReference>
<dbReference type="PRINTS" id="PR00237">
    <property type="entry name" value="GPCRRHODOPSN"/>
</dbReference>
<dbReference type="PRINTS" id="PR00595">
    <property type="entry name" value="P2Y1PRNOCPTR"/>
</dbReference>
<dbReference type="PRINTS" id="PR01157">
    <property type="entry name" value="P2YPURNOCPTR"/>
</dbReference>
<dbReference type="SUPFAM" id="SSF81321">
    <property type="entry name" value="Family A G protein-coupled receptor-like"/>
    <property type="match status" value="1"/>
</dbReference>
<dbReference type="PROSITE" id="PS00237">
    <property type="entry name" value="G_PROTEIN_RECEP_F1_1"/>
    <property type="match status" value="1"/>
</dbReference>
<dbReference type="PROSITE" id="PS50262">
    <property type="entry name" value="G_PROTEIN_RECEP_F1_2"/>
    <property type="match status" value="1"/>
</dbReference>
<reference key="1">
    <citation type="journal article" date="1995" name="Biochem. Biophys. Res. Commun.">
        <title>Cloning of rat and mouse P2Y purinoceptors.</title>
        <authorList>
            <person name="Tokuyama Y."/>
            <person name="Hara M."/>
            <person name="Jones E.M.C."/>
            <person name="Fan Z."/>
            <person name="Bell G.I."/>
        </authorList>
    </citation>
    <scope>NUCLEOTIDE SEQUENCE [MRNA]</scope>
    <source>
        <tissue>Insulinoma</tissue>
    </source>
</reference>
<reference key="2">
    <citation type="journal article" date="1999" name="J. Clin. Invest.">
        <title>Defective platelet aggregation and increased resistance to thrombosis in purinergic P2Y(1) receptor-null mice.</title>
        <authorList>
            <person name="Leon C."/>
            <person name="Hechler B."/>
            <person name="Freund M."/>
            <person name="Eckly A."/>
            <person name="Vial C."/>
            <person name="Ohlmann P."/>
            <person name="Dierich A."/>
            <person name="LeMeur M."/>
            <person name="Cazenave J.-P."/>
            <person name="Gachet C."/>
        </authorList>
    </citation>
    <scope>NUCLEOTIDE SEQUENCE [GENOMIC DNA]</scope>
    <scope>FUNCTION</scope>
    <scope>DISRUPTION PHENOTYPE</scope>
    <source>
        <strain>129/Sv</strain>
    </source>
</reference>
<organism>
    <name type="scientific">Mus musculus</name>
    <name type="common">Mouse</name>
    <dbReference type="NCBI Taxonomy" id="10090"/>
    <lineage>
        <taxon>Eukaryota</taxon>
        <taxon>Metazoa</taxon>
        <taxon>Chordata</taxon>
        <taxon>Craniata</taxon>
        <taxon>Vertebrata</taxon>
        <taxon>Euteleostomi</taxon>
        <taxon>Mammalia</taxon>
        <taxon>Eutheria</taxon>
        <taxon>Euarchontoglires</taxon>
        <taxon>Glires</taxon>
        <taxon>Rodentia</taxon>
        <taxon>Myomorpha</taxon>
        <taxon>Muroidea</taxon>
        <taxon>Muridae</taxon>
        <taxon>Murinae</taxon>
        <taxon>Mus</taxon>
        <taxon>Mus</taxon>
    </lineage>
</organism>
<accession>P49650</accession>